<proteinExistence type="inferred from homology"/>
<comment type="function">
    <text evidence="1">Converts 2C-methyl-D-erythritol 2,4-cyclodiphosphate (ME-2,4cPP) into 1-hydroxy-2-methyl-2-(E)-butenyl 4-diphosphate.</text>
</comment>
<comment type="catalytic activity">
    <reaction evidence="1">
        <text>(2E)-4-hydroxy-3-methylbut-2-enyl diphosphate + oxidized [flavodoxin] + H2O + 2 H(+) = 2-C-methyl-D-erythritol 2,4-cyclic diphosphate + reduced [flavodoxin]</text>
        <dbReference type="Rhea" id="RHEA:43604"/>
        <dbReference type="Rhea" id="RHEA-COMP:10622"/>
        <dbReference type="Rhea" id="RHEA-COMP:10623"/>
        <dbReference type="ChEBI" id="CHEBI:15377"/>
        <dbReference type="ChEBI" id="CHEBI:15378"/>
        <dbReference type="ChEBI" id="CHEBI:57618"/>
        <dbReference type="ChEBI" id="CHEBI:58210"/>
        <dbReference type="ChEBI" id="CHEBI:58483"/>
        <dbReference type="ChEBI" id="CHEBI:128753"/>
        <dbReference type="EC" id="1.17.7.3"/>
    </reaction>
</comment>
<comment type="cofactor">
    <cofactor evidence="1">
        <name>[4Fe-4S] cluster</name>
        <dbReference type="ChEBI" id="CHEBI:49883"/>
    </cofactor>
    <text evidence="1">Binds 1 [4Fe-4S] cluster.</text>
</comment>
<comment type="pathway">
    <text evidence="1">Isoprenoid biosynthesis; isopentenyl diphosphate biosynthesis via DXP pathway; isopentenyl diphosphate from 1-deoxy-D-xylulose 5-phosphate: step 5/6.</text>
</comment>
<comment type="similarity">
    <text evidence="1">Belongs to the IspG family.</text>
</comment>
<gene>
    <name evidence="1" type="primary">ispG</name>
    <name type="ordered locus">MCA2483</name>
</gene>
<feature type="chain" id="PRO_0000190596" description="4-hydroxy-3-methylbut-2-en-1-yl diphosphate synthase (flavodoxin)">
    <location>
        <begin position="1"/>
        <end position="407"/>
    </location>
</feature>
<feature type="binding site" evidence="1">
    <location>
        <position position="296"/>
    </location>
    <ligand>
        <name>[4Fe-4S] cluster</name>
        <dbReference type="ChEBI" id="CHEBI:49883"/>
    </ligand>
</feature>
<feature type="binding site" evidence="1">
    <location>
        <position position="299"/>
    </location>
    <ligand>
        <name>[4Fe-4S] cluster</name>
        <dbReference type="ChEBI" id="CHEBI:49883"/>
    </ligand>
</feature>
<feature type="binding site" evidence="1">
    <location>
        <position position="342"/>
    </location>
    <ligand>
        <name>[4Fe-4S] cluster</name>
        <dbReference type="ChEBI" id="CHEBI:49883"/>
    </ligand>
</feature>
<feature type="binding site" evidence="1">
    <location>
        <position position="349"/>
    </location>
    <ligand>
        <name>[4Fe-4S] cluster</name>
        <dbReference type="ChEBI" id="CHEBI:49883"/>
    </ligand>
</feature>
<sequence length="407" mass="44251">MMNRKQTVGVRVGSVRIGGGAPIVVQSMTNTDTADVAGTVRQVIDLARAGSELVRITVNNEEAAEAVPRIREELDRQGCNVPLVGDFHFNGHKLLDKYPACAEALGKFRINPGNVGRGSKRDPQFAQMIEFACRYDKPVRIGVNWGSLDQSVLARLLDENARLAEPRPLPEVMREAVITSALESAEKAQGLGLPKDRIVLSCKMSGVQELISVYEALSSRCDHALHLGLTEAGMGSKGIVASTAALSVLLQQGIGDTIRISLTPEPGADRSLEVIVAQEILQTMGLRSFTPMVISCPGCGRTTSDYFQKLAQQIQTHLRHKMPEWRRRYRGVEDMHVAVMGCVVNGPGESKNANIGISLPGTGEQPVAPVFEDGVKTVTLKGDRIAEEFQELVERYIETHYGSRAEA</sequence>
<reference key="1">
    <citation type="journal article" date="2004" name="PLoS Biol.">
        <title>Genomic insights into methanotrophy: the complete genome sequence of Methylococcus capsulatus (Bath).</title>
        <authorList>
            <person name="Ward N.L."/>
            <person name="Larsen O."/>
            <person name="Sakwa J."/>
            <person name="Bruseth L."/>
            <person name="Khouri H.M."/>
            <person name="Durkin A.S."/>
            <person name="Dimitrov G."/>
            <person name="Jiang L."/>
            <person name="Scanlan D."/>
            <person name="Kang K.H."/>
            <person name="Lewis M.R."/>
            <person name="Nelson K.E."/>
            <person name="Methe B.A."/>
            <person name="Wu M."/>
            <person name="Heidelberg J.F."/>
            <person name="Paulsen I.T."/>
            <person name="Fouts D.E."/>
            <person name="Ravel J."/>
            <person name="Tettelin H."/>
            <person name="Ren Q."/>
            <person name="Read T.D."/>
            <person name="DeBoy R.T."/>
            <person name="Seshadri R."/>
            <person name="Salzberg S.L."/>
            <person name="Jensen H.B."/>
            <person name="Birkeland N.K."/>
            <person name="Nelson W.C."/>
            <person name="Dodson R.J."/>
            <person name="Grindhaug S.H."/>
            <person name="Holt I.E."/>
            <person name="Eidhammer I."/>
            <person name="Jonasen I."/>
            <person name="Vanaken S."/>
            <person name="Utterback T.R."/>
            <person name="Feldblyum T.V."/>
            <person name="Fraser C.M."/>
            <person name="Lillehaug J.R."/>
            <person name="Eisen J.A."/>
        </authorList>
    </citation>
    <scope>NUCLEOTIDE SEQUENCE [LARGE SCALE GENOMIC DNA]</scope>
    <source>
        <strain>ATCC 33009 / NCIMB 11132 / Bath</strain>
    </source>
</reference>
<name>ISPG_METCA</name>
<keyword id="KW-0004">4Fe-4S</keyword>
<keyword id="KW-0408">Iron</keyword>
<keyword id="KW-0411">Iron-sulfur</keyword>
<keyword id="KW-0414">Isoprene biosynthesis</keyword>
<keyword id="KW-0479">Metal-binding</keyword>
<keyword id="KW-0560">Oxidoreductase</keyword>
<keyword id="KW-1185">Reference proteome</keyword>
<evidence type="ECO:0000255" key="1">
    <source>
        <dbReference type="HAMAP-Rule" id="MF_00159"/>
    </source>
</evidence>
<dbReference type="EC" id="1.17.7.3" evidence="1"/>
<dbReference type="EMBL" id="AE017282">
    <property type="protein sequence ID" value="AAU91397.1"/>
    <property type="molecule type" value="Genomic_DNA"/>
</dbReference>
<dbReference type="RefSeq" id="WP_010961706.1">
    <property type="nucleotide sequence ID" value="NC_002977.6"/>
</dbReference>
<dbReference type="SMR" id="Q604Q5"/>
<dbReference type="STRING" id="243233.MCA2483"/>
<dbReference type="GeneID" id="88224681"/>
<dbReference type="KEGG" id="mca:MCA2483"/>
<dbReference type="eggNOG" id="COG0821">
    <property type="taxonomic scope" value="Bacteria"/>
</dbReference>
<dbReference type="HOGENOM" id="CLU_042258_1_0_6"/>
<dbReference type="UniPathway" id="UPA00056">
    <property type="reaction ID" value="UER00096"/>
</dbReference>
<dbReference type="Proteomes" id="UP000006821">
    <property type="component" value="Chromosome"/>
</dbReference>
<dbReference type="GO" id="GO:0051539">
    <property type="term" value="F:4 iron, 4 sulfur cluster binding"/>
    <property type="evidence" value="ECO:0007669"/>
    <property type="project" value="UniProtKB-UniRule"/>
</dbReference>
<dbReference type="GO" id="GO:0046429">
    <property type="term" value="F:4-hydroxy-3-methylbut-2-en-1-yl diphosphate synthase activity (ferredoxin)"/>
    <property type="evidence" value="ECO:0007669"/>
    <property type="project" value="UniProtKB-UniRule"/>
</dbReference>
<dbReference type="GO" id="GO:0141197">
    <property type="term" value="F:4-hydroxy-3-methylbut-2-enyl-diphosphate synthase activity (flavodoxin)"/>
    <property type="evidence" value="ECO:0007669"/>
    <property type="project" value="UniProtKB-EC"/>
</dbReference>
<dbReference type="GO" id="GO:0005506">
    <property type="term" value="F:iron ion binding"/>
    <property type="evidence" value="ECO:0007669"/>
    <property type="project" value="InterPro"/>
</dbReference>
<dbReference type="GO" id="GO:0019288">
    <property type="term" value="P:isopentenyl diphosphate biosynthetic process, methylerythritol 4-phosphate pathway"/>
    <property type="evidence" value="ECO:0007669"/>
    <property type="project" value="UniProtKB-UniRule"/>
</dbReference>
<dbReference type="GO" id="GO:0016114">
    <property type="term" value="P:terpenoid biosynthetic process"/>
    <property type="evidence" value="ECO:0007669"/>
    <property type="project" value="InterPro"/>
</dbReference>
<dbReference type="FunFam" id="3.30.413.10:FF:000012">
    <property type="entry name" value="4-hydroxy-3-methylbut-2-en-1-yl diphosphate synthase (flavodoxin)"/>
    <property type="match status" value="1"/>
</dbReference>
<dbReference type="Gene3D" id="3.20.20.20">
    <property type="entry name" value="Dihydropteroate synthase-like"/>
    <property type="match status" value="1"/>
</dbReference>
<dbReference type="Gene3D" id="3.30.413.10">
    <property type="entry name" value="Sulfite Reductase Hemoprotein, domain 1"/>
    <property type="match status" value="1"/>
</dbReference>
<dbReference type="HAMAP" id="MF_00159">
    <property type="entry name" value="IspG"/>
    <property type="match status" value="1"/>
</dbReference>
<dbReference type="InterPro" id="IPR011005">
    <property type="entry name" value="Dihydropteroate_synth-like_sf"/>
</dbReference>
<dbReference type="InterPro" id="IPR016425">
    <property type="entry name" value="IspG_bac"/>
</dbReference>
<dbReference type="InterPro" id="IPR004588">
    <property type="entry name" value="IspG_bac-typ"/>
</dbReference>
<dbReference type="InterPro" id="IPR045854">
    <property type="entry name" value="NO2/SO3_Rdtase_4Fe4S_sf"/>
</dbReference>
<dbReference type="NCBIfam" id="TIGR00612">
    <property type="entry name" value="ispG_gcpE"/>
    <property type="match status" value="1"/>
</dbReference>
<dbReference type="NCBIfam" id="NF001540">
    <property type="entry name" value="PRK00366.1"/>
    <property type="match status" value="1"/>
</dbReference>
<dbReference type="PANTHER" id="PTHR30454">
    <property type="entry name" value="4-HYDROXY-3-METHYLBUT-2-EN-1-YL DIPHOSPHATE SYNTHASE"/>
    <property type="match status" value="1"/>
</dbReference>
<dbReference type="PANTHER" id="PTHR30454:SF0">
    <property type="entry name" value="4-HYDROXY-3-METHYLBUT-2-EN-1-YL DIPHOSPHATE SYNTHASE (FERREDOXIN), CHLOROPLASTIC"/>
    <property type="match status" value="1"/>
</dbReference>
<dbReference type="Pfam" id="PF04551">
    <property type="entry name" value="GcpE"/>
    <property type="match status" value="1"/>
</dbReference>
<dbReference type="PIRSF" id="PIRSF004640">
    <property type="entry name" value="IspG"/>
    <property type="match status" value="1"/>
</dbReference>
<organism>
    <name type="scientific">Methylococcus capsulatus (strain ATCC 33009 / NCIMB 11132 / Bath)</name>
    <dbReference type="NCBI Taxonomy" id="243233"/>
    <lineage>
        <taxon>Bacteria</taxon>
        <taxon>Pseudomonadati</taxon>
        <taxon>Pseudomonadota</taxon>
        <taxon>Gammaproteobacteria</taxon>
        <taxon>Methylococcales</taxon>
        <taxon>Methylococcaceae</taxon>
        <taxon>Methylococcus</taxon>
    </lineage>
</organism>
<accession>Q604Q5</accession>
<protein>
    <recommendedName>
        <fullName evidence="1">4-hydroxy-3-methylbut-2-en-1-yl diphosphate synthase (flavodoxin)</fullName>
        <ecNumber evidence="1">1.17.7.3</ecNumber>
    </recommendedName>
    <alternativeName>
        <fullName evidence="1">1-hydroxy-2-methyl-2-(E)-butenyl 4-diphosphate synthase</fullName>
    </alternativeName>
</protein>